<name>PDS_ORYSI</name>
<feature type="transit peptide" description="Chloroplast and chromoplast" evidence="2">
    <location>
        <begin position="1"/>
        <end position="87"/>
    </location>
</feature>
<feature type="chain" id="PRO_0000295009" description="15-cis-phytoene desaturase, chloroplastic/chromoplastic">
    <location>
        <begin position="88"/>
        <end position="578"/>
    </location>
</feature>
<feature type="binding site" evidence="4 9">
    <location>
        <position position="115"/>
    </location>
    <ligand>
        <name>FAD</name>
        <dbReference type="ChEBI" id="CHEBI:57692"/>
    </ligand>
</feature>
<feature type="binding site" evidence="4 9">
    <location>
        <begin position="134"/>
        <end position="135"/>
    </location>
    <ligand>
        <name>FAD</name>
        <dbReference type="ChEBI" id="CHEBI:57692"/>
    </ligand>
</feature>
<feature type="binding site" evidence="4 9">
    <location>
        <position position="142"/>
    </location>
    <ligand>
        <name>FAD</name>
        <dbReference type="ChEBI" id="CHEBI:57692"/>
    </ligand>
</feature>
<feature type="binding site" evidence="4 9">
    <location>
        <begin position="159"/>
        <end position="160"/>
    </location>
    <ligand>
        <name>FAD</name>
        <dbReference type="ChEBI" id="CHEBI:57692"/>
    </ligand>
</feature>
<feature type="binding site" evidence="4 9">
    <location>
        <position position="165"/>
    </location>
    <ligand>
        <name>FAD</name>
        <dbReference type="ChEBI" id="CHEBI:57692"/>
    </ligand>
</feature>
<feature type="binding site" evidence="4 9">
    <location>
        <position position="300"/>
    </location>
    <ligand>
        <name>substrate</name>
    </ligand>
</feature>
<feature type="binding site" evidence="4 9">
    <location>
        <position position="342"/>
    </location>
    <ligand>
        <name>FAD</name>
        <dbReference type="ChEBI" id="CHEBI:57692"/>
    </ligand>
</feature>
<feature type="binding site" evidence="4 9">
    <location>
        <position position="531"/>
    </location>
    <ligand>
        <name>FAD</name>
        <dbReference type="ChEBI" id="CHEBI:57692"/>
    </ligand>
</feature>
<feature type="binding site" evidence="4 9">
    <location>
        <position position="539"/>
    </location>
    <ligand>
        <name>substrate</name>
    </ligand>
</feature>
<feature type="binding site" evidence="4 9">
    <location>
        <position position="541"/>
    </location>
    <ligand>
        <name>FAD</name>
        <dbReference type="ChEBI" id="CHEBI:57692"/>
    </ligand>
</feature>
<feature type="mutagenesis site" description="Shows less than 5% activity of that of the wild-type. Confers norflurazon (NFZ) resistance. Remains flavinylated." evidence="5">
    <original>F</original>
    <variation>V</variation>
    <location>
        <position position="162"/>
    </location>
</feature>
<feature type="mutagenesis site" description="15% of the zeta-carotene forming activity of that of the wild-type. 3.5-fold increase in affinity, but 23-fold decrease in reaction rate with decylplastoquinone (DPQ) as substrate. 12-fold increase in affinity, but 46-fold decrease in reaction rate with phytoene as substrate. Incorporation of FAD into the enzyme is not affected. No difference in membrane association compared to wild-type. No effect on the oligomeric assembly or solubility of the protein. 5-fold increased resistance to norflurazon (NFZ) compared to wild-type." evidence="5">
    <original>R</original>
    <variation>S</variation>
    <location>
        <position position="300"/>
    </location>
</feature>
<feature type="mutagenesis site" description="6% of the zeta-carotene forming activity of that of the wild-type." evidence="5">
    <original>R</original>
    <variation>T</variation>
    <location>
        <position position="300"/>
    </location>
</feature>
<feature type="mutagenesis site" description="5% of the zeta-carotene forming activity of that of the wild-type. Forms 9,15-di-cis-phytofluene and 9,15,9'-tri-cis-zeta-carotene as the sole products normally as does the wild-type." evidence="5">
    <original>Y</original>
    <variation>F</variation>
    <location>
        <position position="506"/>
    </location>
</feature>
<feature type="mutagenesis site" description="5% of the zeta-carotene forming activity of that of the wild-type. Forms 9,15-di-cis-phytofluene and 9,15,9'-tri-cis-zeta-carotene as the sole products normally as does the wild-type." evidence="5">
    <original>T</original>
    <variation>V</variation>
    <location>
        <position position="508"/>
    </location>
</feature>
<feature type="mutagenesis site" description="Shows less than 5% activity of that of the wild-type. Confers norflurazon (NFZ) resistance. Remains flavinylated." evidence="5">
    <original>L</original>
    <variation>F</variation>
    <variation>R</variation>
    <location>
        <position position="538"/>
    </location>
</feature>
<feature type="sequence conflict" description="In Ref. 2; AAD02489." evidence="8" ref="2">
    <original>SQ</original>
    <variation>AS</variation>
    <location>
        <begin position="15"/>
        <end position="16"/>
    </location>
</feature>
<feature type="sequence conflict" description="In Ref. 2; AAD02489." evidence="8" ref="2">
    <original>S</original>
    <variation>Y</variation>
    <location>
        <position position="19"/>
    </location>
</feature>
<feature type="sequence conflict" description="In Ref. 2; AAD02489." evidence="8" ref="2">
    <original>S</original>
    <variation>G</variation>
    <location>
        <position position="40"/>
    </location>
</feature>
<feature type="sequence conflict" description="In Ref. 2; AAD02489." evidence="8" ref="2">
    <original>F</original>
    <variation>S</variation>
    <location>
        <position position="199"/>
    </location>
</feature>
<feature type="sequence conflict" description="In Ref. 2; AAD02489." evidence="8" ref="2">
    <original>N</original>
    <variation>S</variation>
    <location>
        <position position="446"/>
    </location>
</feature>
<feature type="strand" evidence="10">
    <location>
        <begin position="106"/>
        <end position="110"/>
    </location>
</feature>
<feature type="helix" evidence="10">
    <location>
        <begin position="114"/>
        <end position="125"/>
    </location>
</feature>
<feature type="strand" evidence="10">
    <location>
        <begin position="129"/>
        <end position="133"/>
    </location>
</feature>
<feature type="strand" evidence="10">
    <location>
        <begin position="135"/>
        <end position="140"/>
    </location>
</feature>
<feature type="helix" evidence="10">
    <location>
        <begin position="141"/>
        <end position="143"/>
    </location>
</feature>
<feature type="strand" evidence="10">
    <location>
        <begin position="145"/>
        <end position="147"/>
    </location>
</feature>
<feature type="strand" evidence="10">
    <location>
        <begin position="153"/>
        <end position="157"/>
    </location>
</feature>
<feature type="helix" evidence="10">
    <location>
        <begin position="166"/>
        <end position="174"/>
    </location>
</feature>
<feature type="helix" evidence="10">
    <location>
        <begin position="178"/>
        <end position="180"/>
    </location>
</feature>
<feature type="strand" evidence="10">
    <location>
        <begin position="181"/>
        <end position="183"/>
    </location>
</feature>
<feature type="strand" evidence="10">
    <location>
        <begin position="186"/>
        <end position="191"/>
    </location>
</feature>
<feature type="strand" evidence="10">
    <location>
        <begin position="193"/>
        <end position="195"/>
    </location>
</feature>
<feature type="strand" evidence="10">
    <location>
        <begin position="199"/>
        <end position="203"/>
    </location>
</feature>
<feature type="helix" evidence="10">
    <location>
        <begin position="212"/>
        <end position="220"/>
    </location>
</feature>
<feature type="helix" evidence="10">
    <location>
        <begin position="227"/>
        <end position="242"/>
    </location>
</feature>
<feature type="helix" evidence="10">
    <location>
        <begin position="245"/>
        <end position="250"/>
    </location>
</feature>
<feature type="helix" evidence="10">
    <location>
        <begin position="251"/>
        <end position="253"/>
    </location>
</feature>
<feature type="helix" evidence="10">
    <location>
        <begin position="256"/>
        <end position="262"/>
    </location>
</feature>
<feature type="helix" evidence="10">
    <location>
        <begin position="267"/>
        <end position="272"/>
    </location>
</feature>
<feature type="helix" evidence="10">
    <location>
        <begin position="274"/>
        <end position="282"/>
    </location>
</feature>
<feature type="turn" evidence="10">
    <location>
        <begin position="286"/>
        <end position="288"/>
    </location>
</feature>
<feature type="helix" evidence="10">
    <location>
        <begin position="291"/>
        <end position="302"/>
    </location>
</feature>
<feature type="turn" evidence="10">
    <location>
        <begin position="305"/>
        <end position="308"/>
    </location>
</feature>
<feature type="strand" evidence="10">
    <location>
        <begin position="310"/>
        <end position="315"/>
    </location>
</feature>
<feature type="helix" evidence="10">
    <location>
        <begin position="317"/>
        <end position="320"/>
    </location>
</feature>
<feature type="helix" evidence="10">
    <location>
        <begin position="322"/>
        <end position="331"/>
    </location>
</feature>
<feature type="strand" evidence="10">
    <location>
        <begin position="335"/>
        <end position="339"/>
    </location>
</feature>
<feature type="strand" evidence="10">
    <location>
        <begin position="342"/>
        <end position="347"/>
    </location>
</feature>
<feature type="strand" evidence="10">
    <location>
        <begin position="351"/>
        <end position="358"/>
    </location>
</feature>
<feature type="strand" evidence="10">
    <location>
        <begin position="367"/>
        <end position="371"/>
    </location>
</feature>
<feature type="helix" evidence="10">
    <location>
        <begin position="375"/>
        <end position="381"/>
    </location>
</feature>
<feature type="turn" evidence="10">
    <location>
        <begin position="384"/>
        <end position="388"/>
    </location>
</feature>
<feature type="helix" evidence="10">
    <location>
        <begin position="390"/>
        <end position="393"/>
    </location>
</feature>
<feature type="helix" evidence="10">
    <location>
        <begin position="394"/>
        <end position="396"/>
    </location>
</feature>
<feature type="strand" evidence="10">
    <location>
        <begin position="403"/>
        <end position="412"/>
    </location>
</feature>
<feature type="strand" evidence="10">
    <location>
        <begin position="427"/>
        <end position="434"/>
    </location>
</feature>
<feature type="helix" evidence="10">
    <location>
        <begin position="435"/>
        <end position="438"/>
    </location>
</feature>
<feature type="strand" evidence="10">
    <location>
        <begin position="449"/>
        <end position="454"/>
    </location>
</feature>
<feature type="turn" evidence="10">
    <location>
        <begin position="458"/>
        <end position="462"/>
    </location>
</feature>
<feature type="helix" evidence="10">
    <location>
        <begin position="465"/>
        <end position="479"/>
    </location>
</feature>
<feature type="turn" evidence="10">
    <location>
        <begin position="481"/>
        <end position="483"/>
    </location>
</feature>
<feature type="strand" evidence="10">
    <location>
        <begin position="488"/>
        <end position="491"/>
    </location>
</feature>
<feature type="strand" evidence="10">
    <location>
        <begin position="493"/>
        <end position="501"/>
    </location>
</feature>
<feature type="helix" evidence="10">
    <location>
        <begin position="513"/>
        <end position="515"/>
    </location>
</feature>
<feature type="strand" evidence="10">
    <location>
        <begin position="526"/>
        <end position="528"/>
    </location>
</feature>
<feature type="helix" evidence="10">
    <location>
        <begin position="541"/>
        <end position="557"/>
    </location>
</feature>
<feature type="helix" evidence="10">
    <location>
        <begin position="559"/>
        <end position="566"/>
    </location>
</feature>
<reference key="1">
    <citation type="journal article" date="2005" name="PLoS Biol.">
        <title>The genomes of Oryza sativa: a history of duplications.</title>
        <authorList>
            <person name="Yu J."/>
            <person name="Wang J."/>
            <person name="Lin W."/>
            <person name="Li S."/>
            <person name="Li H."/>
            <person name="Zhou J."/>
            <person name="Ni P."/>
            <person name="Dong W."/>
            <person name="Hu S."/>
            <person name="Zeng C."/>
            <person name="Zhang J."/>
            <person name="Zhang Y."/>
            <person name="Li R."/>
            <person name="Xu Z."/>
            <person name="Li S."/>
            <person name="Li X."/>
            <person name="Zheng H."/>
            <person name="Cong L."/>
            <person name="Lin L."/>
            <person name="Yin J."/>
            <person name="Geng J."/>
            <person name="Li G."/>
            <person name="Shi J."/>
            <person name="Liu J."/>
            <person name="Lv H."/>
            <person name="Li J."/>
            <person name="Wang J."/>
            <person name="Deng Y."/>
            <person name="Ran L."/>
            <person name="Shi X."/>
            <person name="Wang X."/>
            <person name="Wu Q."/>
            <person name="Li C."/>
            <person name="Ren X."/>
            <person name="Wang J."/>
            <person name="Wang X."/>
            <person name="Li D."/>
            <person name="Liu D."/>
            <person name="Zhang X."/>
            <person name="Ji Z."/>
            <person name="Zhao W."/>
            <person name="Sun Y."/>
            <person name="Zhang Z."/>
            <person name="Bao J."/>
            <person name="Han Y."/>
            <person name="Dong L."/>
            <person name="Ji J."/>
            <person name="Chen P."/>
            <person name="Wu S."/>
            <person name="Liu J."/>
            <person name="Xiao Y."/>
            <person name="Bu D."/>
            <person name="Tan J."/>
            <person name="Yang L."/>
            <person name="Ye C."/>
            <person name="Zhang J."/>
            <person name="Xu J."/>
            <person name="Zhou Y."/>
            <person name="Yu Y."/>
            <person name="Zhang B."/>
            <person name="Zhuang S."/>
            <person name="Wei H."/>
            <person name="Liu B."/>
            <person name="Lei M."/>
            <person name="Yu H."/>
            <person name="Li Y."/>
            <person name="Xu H."/>
            <person name="Wei S."/>
            <person name="He X."/>
            <person name="Fang L."/>
            <person name="Zhang Z."/>
            <person name="Zhang Y."/>
            <person name="Huang X."/>
            <person name="Su Z."/>
            <person name="Tong W."/>
            <person name="Li J."/>
            <person name="Tong Z."/>
            <person name="Li S."/>
            <person name="Ye J."/>
            <person name="Wang L."/>
            <person name="Fang L."/>
            <person name="Lei T."/>
            <person name="Chen C.-S."/>
            <person name="Chen H.-C."/>
            <person name="Xu Z."/>
            <person name="Li H."/>
            <person name="Huang H."/>
            <person name="Zhang F."/>
            <person name="Xu H."/>
            <person name="Li N."/>
            <person name="Zhao C."/>
            <person name="Li S."/>
            <person name="Dong L."/>
            <person name="Huang Y."/>
            <person name="Li L."/>
            <person name="Xi Y."/>
            <person name="Qi Q."/>
            <person name="Li W."/>
            <person name="Zhang B."/>
            <person name="Hu W."/>
            <person name="Zhang Y."/>
            <person name="Tian X."/>
            <person name="Jiao Y."/>
            <person name="Liang X."/>
            <person name="Jin J."/>
            <person name="Gao L."/>
            <person name="Zheng W."/>
            <person name="Hao B."/>
            <person name="Liu S.-M."/>
            <person name="Wang W."/>
            <person name="Yuan L."/>
            <person name="Cao M."/>
            <person name="McDermott J."/>
            <person name="Samudrala R."/>
            <person name="Wang J."/>
            <person name="Wong G.K.-S."/>
            <person name="Yang H."/>
        </authorList>
    </citation>
    <scope>NUCLEOTIDE SEQUENCE [LARGE SCALE GENOMIC DNA]</scope>
    <source>
        <strain>cv. 93-11</strain>
    </source>
</reference>
<reference key="2">
    <citation type="online journal article" date="1999" name="Plant Gene Register">
        <title>A rice cDNA encoding phytoene desaturase.</title>
        <authorList>
            <person name="Vigneswaran A."/>
            <person name="Wurtzel E.T."/>
        </authorList>
        <locator>PGR99-131</locator>
    </citation>
    <scope>NUCLEOTIDE SEQUENCE [MRNA] OF 14-578</scope>
    <source>
        <strain>cv. IR36</strain>
    </source>
</reference>
<reference key="3">
    <citation type="journal article" date="2015" name="PLoS ONE">
        <title>Phytoene Desaturase from Oryza sativa: Oligomeric Assembly, Membrane Association and Preliminary 3D-Analysis.</title>
        <authorList>
            <person name="Gemmecker S."/>
            <person name="Schaub P."/>
            <person name="Koschmieder J."/>
            <person name="Brausemann A."/>
            <person name="Drepper F."/>
            <person name="Rodriguez-Franco M."/>
            <person name="Ghisla S."/>
            <person name="Warscheid B."/>
            <person name="Einsle O."/>
            <person name="Beyer P."/>
        </authorList>
    </citation>
    <scope>PROTEIN SEQUENCE OF 122-136; 394-397; 413-425; 479-500; 521-536 AND 550-564</scope>
    <scope>IDENTIFICATION BY MASS SPECTROMETRY</scope>
    <scope>CRYSTALLIZATION</scope>
    <scope>FUNCTION</scope>
    <scope>CATALYTIC ACTIVITY</scope>
    <scope>SUBSTRATE SPECIFICITY</scope>
    <scope>COFACTOR</scope>
    <scope>ACTIVITY REGULATION</scope>
    <scope>SUBUNIT</scope>
    <scope>SUBCELLULAR LOCATION</scope>
</reference>
<reference key="4">
    <citation type="journal article" date="2017" name="PLoS ONE">
        <title>Plant-type phytoene desaturase: Functional evaluation of structural implications.</title>
        <authorList>
            <person name="Koschmieder J."/>
            <person name="Fehling-Kaschek M."/>
            <person name="Schaub P."/>
            <person name="Ghisla S."/>
            <person name="Brausemann A."/>
            <person name="Timmer J."/>
            <person name="Beyer P."/>
        </authorList>
    </citation>
    <scope>FUNCTION</scope>
    <scope>CATALYTIC ACTIVITY</scope>
    <scope>COFACTOR</scope>
    <scope>ACTIVITY REGULATION</scope>
    <scope>BIOPHYSICOCHEMICAL PROPERTIES</scope>
    <scope>MUTAGENESIS OF PHE-162; ARG-300; TYR-506; THR-508 AND LEU-538</scope>
    <scope>REACTION MECHANISM</scope>
</reference>
<reference evidence="9" key="5">
    <citation type="journal article" date="2017" name="Structure">
        <title>Structure of Phytoene Desaturase Provides Insights into Herbicide Binding and Reaction Mechanisms Involved in Carotene Desaturation.</title>
        <authorList>
            <person name="Brausemann A."/>
            <person name="Gemmecker S."/>
            <person name="Koschmieder J."/>
            <person name="Ghisla S."/>
            <person name="Beyer P."/>
            <person name="Einsle O."/>
        </authorList>
    </citation>
    <scope>X-RAY CRYSTALLOGRAPHY (2.77 ANGSTROMS) OF 88-578 IN COMPLEX WITH FAD AND HERBICIDAL INHIBITOR</scope>
    <scope>SUBUNIT</scope>
    <scope>REACTION MECHANISM</scope>
</reference>
<sequence>MDTGCLSSMNITGTSQARSFAGQLPTHRCFASSSIQALKSSQHVSFGVKSLVLRNKGKRFRRRLGALQVVCQDFPRPPLENTINFLEAGQLSSFFRNSEQPTKPLQVVIAGAGLAGLSTAKYLADAGHKPILLEARDVLGGKIAAWKDEDGDWYETGLHIFFGAYPNIQNLFGELGINDRLQWKEHSMIFAMPNKPGEFSRFDFPETLPAPLNGIWAILRNNEMLTWPEKVKFALGLLPAMVGGQAYVEAQDGFTVSEWMKKQGVPDRVNDEVFIAMSKALNFINPDELSMQCILIALNRFLQEKHGSKMAFLDGNPPERLCMPIVDHVRSLGGEVRLNSRIQKIELNPDGTVKHFALTDGTQITGDAYVFATPVDILKLLVPQEWKEISYFKKLEKLVGVPVINVHIWFDRKLKNTYDHLLFSRSSLLSVYADMSVTCKEYYDPNRSMLELVFAPAEEWVGRSDTEIIEATMQELAKLFPDEIAADQSKAKILKYHVVKTPRSVYKTIPDCEPCRPLQRSPIEGFYLAGDYTKQKYLASMEGAVLSGKLCAQSVVEDYKMLSRRSLKSLQSEVPVAS</sequence>
<keyword id="KW-0002">3D-structure</keyword>
<keyword id="KW-0125">Carotenoid biosynthesis</keyword>
<keyword id="KW-0150">Chloroplast</keyword>
<keyword id="KW-0957">Chromoplast</keyword>
<keyword id="KW-0903">Direct protein sequencing</keyword>
<keyword id="KW-0274">FAD</keyword>
<keyword id="KW-0285">Flavoprotein</keyword>
<keyword id="KW-0472">Membrane</keyword>
<keyword id="KW-0560">Oxidoreductase</keyword>
<keyword id="KW-0934">Plastid</keyword>
<keyword id="KW-1185">Reference proteome</keyword>
<keyword id="KW-0809">Transit peptide</keyword>
<accession>A2XDA1</accession>
<accession>Q93Y74</accession>
<accession>Q9ZTN9</accession>
<protein>
    <recommendedName>
        <fullName evidence="8">15-cis-phytoene desaturase, chloroplastic/chromoplastic</fullName>
        <ecNumber evidence="3 5">1.3.5.5</ecNumber>
    </recommendedName>
    <alternativeName>
        <fullName evidence="6">Phytoene dehydrogenase</fullName>
    </alternativeName>
    <alternativeName>
        <fullName evidence="7">Phytoene desaturase</fullName>
    </alternativeName>
</protein>
<gene>
    <name type="primary">PDS1</name>
    <name type="synonym">PDS</name>
    <name type="ORF">OsI_010044</name>
</gene>
<dbReference type="EC" id="1.3.5.5" evidence="3 5"/>
<dbReference type="EMBL" id="CM000128">
    <property type="status" value="NOT_ANNOTATED_CDS"/>
    <property type="molecule type" value="Genomic_DNA"/>
</dbReference>
<dbReference type="EMBL" id="AF049356">
    <property type="protein sequence ID" value="AAD02489.1"/>
    <property type="molecule type" value="mRNA"/>
</dbReference>
<dbReference type="PDB" id="5MOG">
    <property type="method" value="X-ray"/>
    <property type="resolution" value="2.77 A"/>
    <property type="chains" value="A/B/C/D/E=88-578"/>
</dbReference>
<dbReference type="PDBsum" id="5MOG"/>
<dbReference type="SMR" id="A2XDA1"/>
<dbReference type="STRING" id="39946.A2XDA1"/>
<dbReference type="EnsemblPlants" id="OsGoSa_03g0006140.01">
    <property type="protein sequence ID" value="OsGoSa_03g0006140.01"/>
    <property type="gene ID" value="OsGoSa_03g0006140"/>
</dbReference>
<dbReference type="EnsemblPlants" id="OsIR64_03g0006100.01">
    <property type="protein sequence ID" value="OsIR64_03g0006100.01"/>
    <property type="gene ID" value="OsIR64_03g0006100"/>
</dbReference>
<dbReference type="EnsemblPlants" id="OsKYG_03g0006180.01">
    <property type="protein sequence ID" value="OsKYG_03g0006180.01"/>
    <property type="gene ID" value="OsKYG_03g0006180"/>
</dbReference>
<dbReference type="EnsemblPlants" id="OsLaMu_03g0006150.01">
    <property type="protein sequence ID" value="OsLaMu_03g0006150.01"/>
    <property type="gene ID" value="OsLaMu_03g0006150"/>
</dbReference>
<dbReference type="EnsemblPlants" id="OsLima_03g0006130.01">
    <property type="protein sequence ID" value="OsLima_03g0006130.01"/>
    <property type="gene ID" value="OsLima_03g0006130"/>
</dbReference>
<dbReference type="EnsemblPlants" id="OsLiXu_03g0006160.01">
    <property type="protein sequence ID" value="OsLiXu_03g0006160.01"/>
    <property type="gene ID" value="OsLiXu_03g0006160"/>
</dbReference>
<dbReference type="EnsemblPlants" id="OsMH63_03G006130_01">
    <property type="protein sequence ID" value="OsMH63_03G006130_01"/>
    <property type="gene ID" value="OsMH63_03G006130"/>
</dbReference>
<dbReference type="EnsemblPlants" id="OsMH63_03G006130_04">
    <property type="protein sequence ID" value="OsMH63_03G006130_04"/>
    <property type="gene ID" value="OsMH63_03G006130"/>
</dbReference>
<dbReference type="EnsemblPlants" id="OsPr106_03g0006170.01">
    <property type="protein sequence ID" value="OsPr106_03g0006170.01"/>
    <property type="gene ID" value="OsPr106_03g0006170"/>
</dbReference>
<dbReference type="EnsemblPlants" id="OsZS97_03G005980_02">
    <property type="protein sequence ID" value="OsZS97_03G005980_02"/>
    <property type="gene ID" value="OsZS97_03G005980"/>
</dbReference>
<dbReference type="EnsemblPlants" id="OsZS97_03G005980_03">
    <property type="protein sequence ID" value="OsZS97_03G005980_03"/>
    <property type="gene ID" value="OsZS97_03G005980"/>
</dbReference>
<dbReference type="Gramene" id="OsGoSa_03g0006140.01">
    <property type="protein sequence ID" value="OsGoSa_03g0006140.01"/>
    <property type="gene ID" value="OsGoSa_03g0006140"/>
</dbReference>
<dbReference type="Gramene" id="OsIR64_03g0006100.01">
    <property type="protein sequence ID" value="OsIR64_03g0006100.01"/>
    <property type="gene ID" value="OsIR64_03g0006100"/>
</dbReference>
<dbReference type="Gramene" id="OsKYG_03g0006180.01">
    <property type="protein sequence ID" value="OsKYG_03g0006180.01"/>
    <property type="gene ID" value="OsKYG_03g0006180"/>
</dbReference>
<dbReference type="Gramene" id="OsLaMu_03g0006150.01">
    <property type="protein sequence ID" value="OsLaMu_03g0006150.01"/>
    <property type="gene ID" value="OsLaMu_03g0006150"/>
</dbReference>
<dbReference type="Gramene" id="OsLima_03g0006130.01">
    <property type="protein sequence ID" value="OsLima_03g0006130.01"/>
    <property type="gene ID" value="OsLima_03g0006130"/>
</dbReference>
<dbReference type="Gramene" id="OsLiXu_03g0006160.01">
    <property type="protein sequence ID" value="OsLiXu_03g0006160.01"/>
    <property type="gene ID" value="OsLiXu_03g0006160"/>
</dbReference>
<dbReference type="Gramene" id="OsMH63_03G006130_01">
    <property type="protein sequence ID" value="OsMH63_03G006130_01"/>
    <property type="gene ID" value="OsMH63_03G006130"/>
</dbReference>
<dbReference type="Gramene" id="OsMH63_03G006130_04">
    <property type="protein sequence ID" value="OsMH63_03G006130_04"/>
    <property type="gene ID" value="OsMH63_03G006130"/>
</dbReference>
<dbReference type="Gramene" id="OsPr106_03g0006170.01">
    <property type="protein sequence ID" value="OsPr106_03g0006170.01"/>
    <property type="gene ID" value="OsPr106_03g0006170"/>
</dbReference>
<dbReference type="Gramene" id="OsZS97_03G005980_02">
    <property type="protein sequence ID" value="OsZS97_03G005980_02"/>
    <property type="gene ID" value="OsZS97_03G005980"/>
</dbReference>
<dbReference type="Gramene" id="OsZS97_03G005980_03">
    <property type="protein sequence ID" value="OsZS97_03G005980_03"/>
    <property type="gene ID" value="OsZS97_03G005980"/>
</dbReference>
<dbReference type="OrthoDB" id="5046242at2759"/>
<dbReference type="BRENDA" id="1.3.5.5">
    <property type="organism ID" value="11590"/>
</dbReference>
<dbReference type="UniPathway" id="UPA00803"/>
<dbReference type="Proteomes" id="UP000007015">
    <property type="component" value="Chromosome 3"/>
</dbReference>
<dbReference type="GO" id="GO:0009507">
    <property type="term" value="C:chloroplast"/>
    <property type="evidence" value="ECO:0000250"/>
    <property type="project" value="UniProtKB"/>
</dbReference>
<dbReference type="GO" id="GO:0009534">
    <property type="term" value="C:chloroplast thylakoid"/>
    <property type="evidence" value="ECO:0007669"/>
    <property type="project" value="TreeGrafter"/>
</dbReference>
<dbReference type="GO" id="GO:0009509">
    <property type="term" value="C:chromoplast"/>
    <property type="evidence" value="ECO:0000250"/>
    <property type="project" value="UniProtKB"/>
</dbReference>
<dbReference type="GO" id="GO:0042170">
    <property type="term" value="C:plastid membrane"/>
    <property type="evidence" value="ECO:0000314"/>
    <property type="project" value="UniProtKB"/>
</dbReference>
<dbReference type="GO" id="GO:0071949">
    <property type="term" value="F:FAD binding"/>
    <property type="evidence" value="ECO:0000314"/>
    <property type="project" value="UniProtKB"/>
</dbReference>
<dbReference type="GO" id="GO:0016166">
    <property type="term" value="F:phytoene dehydrogenase activity"/>
    <property type="evidence" value="ECO:0000314"/>
    <property type="project" value="UniProtKB"/>
</dbReference>
<dbReference type="GO" id="GO:0016120">
    <property type="term" value="P:carotene biosynthetic process"/>
    <property type="evidence" value="ECO:0000314"/>
    <property type="project" value="UniProtKB"/>
</dbReference>
<dbReference type="GO" id="GO:0016117">
    <property type="term" value="P:carotenoid biosynthetic process"/>
    <property type="evidence" value="ECO:0007669"/>
    <property type="project" value="UniProtKB-KW"/>
</dbReference>
<dbReference type="GO" id="GO:0051289">
    <property type="term" value="P:protein homotetramerization"/>
    <property type="evidence" value="ECO:0000314"/>
    <property type="project" value="UniProtKB"/>
</dbReference>
<dbReference type="FunFam" id="3.50.50.60:FF:000091">
    <property type="entry name" value="15-cis-phytoene desaturase, chloroplastic/chromoplastic"/>
    <property type="match status" value="1"/>
</dbReference>
<dbReference type="Gene3D" id="3.50.50.60">
    <property type="entry name" value="FAD/NAD(P)-binding domain"/>
    <property type="match status" value="1"/>
</dbReference>
<dbReference type="InterPro" id="IPR002937">
    <property type="entry name" value="Amino_oxidase"/>
</dbReference>
<dbReference type="InterPro" id="IPR036188">
    <property type="entry name" value="FAD/NAD-bd_sf"/>
</dbReference>
<dbReference type="InterPro" id="IPR014102">
    <property type="entry name" value="Phytoene_desaturase"/>
</dbReference>
<dbReference type="InterPro" id="IPR050464">
    <property type="entry name" value="Zeta_carotene_desat/Oxidored"/>
</dbReference>
<dbReference type="NCBIfam" id="TIGR02731">
    <property type="entry name" value="phytoene_desat"/>
    <property type="match status" value="1"/>
</dbReference>
<dbReference type="PANTHER" id="PTHR42923:SF45">
    <property type="entry name" value="15-CIS-PHYTOENE DESATURASE, CHLOROPLASTIC_CHROMOPLASTIC"/>
    <property type="match status" value="1"/>
</dbReference>
<dbReference type="PANTHER" id="PTHR42923">
    <property type="entry name" value="PROTOPORPHYRINOGEN OXIDASE"/>
    <property type="match status" value="1"/>
</dbReference>
<dbReference type="Pfam" id="PF01593">
    <property type="entry name" value="Amino_oxidase"/>
    <property type="match status" value="1"/>
</dbReference>
<dbReference type="SUPFAM" id="SSF51905">
    <property type="entry name" value="FAD/NAD(P)-binding domain"/>
    <property type="match status" value="1"/>
</dbReference>
<comment type="function">
    <text evidence="3 5">Converts phytoene into zeta-carotene via the intermediary of phytofluene by the symmetrical introduction of two double bonds at the C-11 and C-11' positions of phytoene with a concomitant isomerization of two neighboring double bonds at the C9 and C9' positions from trans to cis. Active with decylplastoquinone (DPQ) as substrate (PubMed:26147209, PubMed:29176862). Also active with other benzoquinones, which are strongly preferred over naphthoquinones as substrates (PubMed:26147209).</text>
</comment>
<comment type="catalytic activity">
    <reaction evidence="3 5">
        <text>2 a plastoquinone + 15-cis-phytoene = 9,9',15-tri-cis-zeta-carotene + 2 a plastoquinol</text>
        <dbReference type="Rhea" id="RHEA:30287"/>
        <dbReference type="Rhea" id="RHEA-COMP:9561"/>
        <dbReference type="Rhea" id="RHEA-COMP:9562"/>
        <dbReference type="ChEBI" id="CHEBI:17757"/>
        <dbReference type="ChEBI" id="CHEBI:27787"/>
        <dbReference type="ChEBI" id="CHEBI:48717"/>
        <dbReference type="ChEBI" id="CHEBI:62192"/>
        <dbReference type="EC" id="1.3.5.5"/>
    </reaction>
</comment>
<comment type="cofactor">
    <cofactor evidence="3 4 5">
        <name>FAD</name>
        <dbReference type="ChEBI" id="CHEBI:57692"/>
    </cofactor>
</comment>
<comment type="activity regulation">
    <text evidence="3 5">Inhibited by the herbicide norflurazon (NFZ).</text>
</comment>
<comment type="biophysicochemical properties">
    <kinetics>
        <KM evidence="5">1.3 mM for decylplastoquinone (DPQ)</KM>
        <KM evidence="5">53.9 mM for phytoene</KM>
        <KM evidence="5">66.8 mM for phytofluene</KM>
        <Vmax evidence="5">28.0 nmol/min/mg enzyme with decylplastoquinone (DPQ) as substrate</Vmax>
        <Vmax evidence="5">46.3 nmol/min/mg enzyme with phytoene as substrate</Vmax>
        <Vmax evidence="5">48.4 nmol/min/mg enzyme with phytofluene as substrate</Vmax>
    </kinetics>
    <phDependence>
        <text evidence="5">Optimum pH is 6.0.</text>
    </phDependence>
    <temperatureDependence>
        <text evidence="5">Optimum temperature is 37 degrees Celsius.</text>
    </temperatureDependence>
</comment>
<comment type="pathway">
    <text>Carotenoid biosynthesis; lycopene biosynthesis.</text>
</comment>
<comment type="subunit">
    <text evidence="3 4">Homotetramer (PubMed:26147209, PubMed:28669634). Homotetramer is the active form of the enzyme (PubMed:26147209).</text>
</comment>
<comment type="subcellular location">
    <subcellularLocation>
        <location evidence="1">Plastid</location>
        <location evidence="1">Chloroplast</location>
    </subcellularLocation>
    <subcellularLocation>
        <location evidence="1">Plastid</location>
        <location evidence="1">Chromoplast</location>
    </subcellularLocation>
    <subcellularLocation>
        <location evidence="3">Membrane</location>
        <topology evidence="3">Peripheral membrane protein</topology>
    </subcellularLocation>
</comment>
<comment type="similarity">
    <text evidence="8">Belongs to the carotenoid/retinoid oxidoreductase family.</text>
</comment>
<proteinExistence type="evidence at protein level"/>
<evidence type="ECO:0000250" key="1">
    <source>
        <dbReference type="UniProtKB" id="Q40406"/>
    </source>
</evidence>
<evidence type="ECO:0000255" key="2"/>
<evidence type="ECO:0000269" key="3">
    <source>
    </source>
</evidence>
<evidence type="ECO:0000269" key="4">
    <source>
    </source>
</evidence>
<evidence type="ECO:0000269" key="5">
    <source>
    </source>
</evidence>
<evidence type="ECO:0000303" key="6">
    <source>
    </source>
</evidence>
<evidence type="ECO:0000303" key="7">
    <source ref="2"/>
</evidence>
<evidence type="ECO:0000305" key="8"/>
<evidence type="ECO:0007744" key="9">
    <source>
        <dbReference type="PDB" id="5MOG"/>
    </source>
</evidence>
<evidence type="ECO:0007829" key="10">
    <source>
        <dbReference type="PDB" id="5MOG"/>
    </source>
</evidence>
<organism>
    <name type="scientific">Oryza sativa subsp. indica</name>
    <name type="common">Rice</name>
    <dbReference type="NCBI Taxonomy" id="39946"/>
    <lineage>
        <taxon>Eukaryota</taxon>
        <taxon>Viridiplantae</taxon>
        <taxon>Streptophyta</taxon>
        <taxon>Embryophyta</taxon>
        <taxon>Tracheophyta</taxon>
        <taxon>Spermatophyta</taxon>
        <taxon>Magnoliopsida</taxon>
        <taxon>Liliopsida</taxon>
        <taxon>Poales</taxon>
        <taxon>Poaceae</taxon>
        <taxon>BOP clade</taxon>
        <taxon>Oryzoideae</taxon>
        <taxon>Oryzeae</taxon>
        <taxon>Oryzinae</taxon>
        <taxon>Oryza</taxon>
        <taxon>Oryza sativa</taxon>
    </lineage>
</organism>